<dbReference type="EMBL" id="U51030">
    <property type="protein sequence ID" value="AAB64458.1"/>
    <property type="molecule type" value="Genomic_DNA"/>
</dbReference>
<dbReference type="EMBL" id="BK006938">
    <property type="protein sequence ID" value="DAA80281.1"/>
    <property type="molecule type" value="Genomic_DNA"/>
</dbReference>
<dbReference type="PIR" id="S70134">
    <property type="entry name" value="S70134"/>
</dbReference>
<dbReference type="SMR" id="Q05612"/>
<dbReference type="FunCoup" id="Q05612">
    <property type="interactions" value="34"/>
</dbReference>
<dbReference type="STRING" id="4932.YDR278C"/>
<dbReference type="PaxDb" id="4932-YDR278C"/>
<dbReference type="EnsemblFungi" id="YDR278C_mRNA">
    <property type="protein sequence ID" value="YDR278C"/>
    <property type="gene ID" value="YDR278C"/>
</dbReference>
<dbReference type="AGR" id="SGD:S000002686"/>
<dbReference type="SGD" id="S000002686">
    <property type="gene designation" value="YDR278C"/>
</dbReference>
<dbReference type="HOGENOM" id="CLU_2238709_0_0_1"/>
<dbReference type="InParanoid" id="Q05612"/>
<dbReference type="PRO" id="PR:Q05612"/>
<dbReference type="Proteomes" id="UP000002311">
    <property type="component" value="Chromosome IV"/>
</dbReference>
<dbReference type="RNAct" id="Q05612">
    <property type="molecule type" value="protein"/>
</dbReference>
<dbReference type="GO" id="GO:0016020">
    <property type="term" value="C:membrane"/>
    <property type="evidence" value="ECO:0007669"/>
    <property type="project" value="UniProtKB-SubCell"/>
</dbReference>
<feature type="chain" id="PRO_0000299881" description="Uncharacterized protein YDR278C">
    <location>
        <begin position="1"/>
        <end position="105"/>
    </location>
</feature>
<feature type="transmembrane region" description="Helical" evidence="1">
    <location>
        <begin position="64"/>
        <end position="84"/>
    </location>
</feature>
<proteinExistence type="predicted"/>
<evidence type="ECO:0000255" key="1"/>
<evidence type="ECO:0000305" key="2"/>
<sequence>MNVSFRSNYHQGTIRCSVTAITSRSHRGDRGSTPRFGVSFLFSRKIHMLIHLPLLFHCDATSHILLISIFFLLLFALPQHTMGINSTSCCVHFSSSYNYNVHKLA</sequence>
<reference key="1">
    <citation type="journal article" date="1997" name="Nature">
        <title>The nucleotide sequence of Saccharomyces cerevisiae chromosome IV.</title>
        <authorList>
            <person name="Jacq C."/>
            <person name="Alt-Moerbe J."/>
            <person name="Andre B."/>
            <person name="Arnold W."/>
            <person name="Bahr A."/>
            <person name="Ballesta J.P.G."/>
            <person name="Bargues M."/>
            <person name="Baron L."/>
            <person name="Becker A."/>
            <person name="Biteau N."/>
            <person name="Bloecker H."/>
            <person name="Blugeon C."/>
            <person name="Boskovic J."/>
            <person name="Brandt P."/>
            <person name="Brueckner M."/>
            <person name="Buitrago M.J."/>
            <person name="Coster F."/>
            <person name="Delaveau T."/>
            <person name="del Rey F."/>
            <person name="Dujon B."/>
            <person name="Eide L.G."/>
            <person name="Garcia-Cantalejo J.M."/>
            <person name="Goffeau A."/>
            <person name="Gomez-Peris A."/>
            <person name="Granotier C."/>
            <person name="Hanemann V."/>
            <person name="Hankeln T."/>
            <person name="Hoheisel J.D."/>
            <person name="Jaeger W."/>
            <person name="Jimenez A."/>
            <person name="Jonniaux J.-L."/>
            <person name="Kraemer C."/>
            <person name="Kuester H."/>
            <person name="Laamanen P."/>
            <person name="Legros Y."/>
            <person name="Louis E.J."/>
            <person name="Moeller-Rieker S."/>
            <person name="Monnet A."/>
            <person name="Moro M."/>
            <person name="Mueller-Auer S."/>
            <person name="Nussbaumer B."/>
            <person name="Paricio N."/>
            <person name="Paulin L."/>
            <person name="Perea J."/>
            <person name="Perez-Alonso M."/>
            <person name="Perez-Ortin J.E."/>
            <person name="Pohl T.M."/>
            <person name="Prydz H."/>
            <person name="Purnelle B."/>
            <person name="Rasmussen S.W."/>
            <person name="Remacha M.A."/>
            <person name="Revuelta J.L."/>
            <person name="Rieger M."/>
            <person name="Salom D."/>
            <person name="Saluz H.P."/>
            <person name="Saiz J.E."/>
            <person name="Saren A.-M."/>
            <person name="Schaefer M."/>
            <person name="Scharfe M."/>
            <person name="Schmidt E.R."/>
            <person name="Schneider C."/>
            <person name="Scholler P."/>
            <person name="Schwarz S."/>
            <person name="Soler-Mira A."/>
            <person name="Urrestarazu L.A."/>
            <person name="Verhasselt P."/>
            <person name="Vissers S."/>
            <person name="Voet M."/>
            <person name="Volckaert G."/>
            <person name="Wagner G."/>
            <person name="Wambutt R."/>
            <person name="Wedler E."/>
            <person name="Wedler H."/>
            <person name="Woelfl S."/>
            <person name="Harris D.E."/>
            <person name="Bowman S."/>
            <person name="Brown D."/>
            <person name="Churcher C.M."/>
            <person name="Connor R."/>
            <person name="Dedman K."/>
            <person name="Gentles S."/>
            <person name="Hamlin N."/>
            <person name="Hunt S."/>
            <person name="Jones L."/>
            <person name="McDonald S."/>
            <person name="Murphy L.D."/>
            <person name="Niblett D."/>
            <person name="Odell C."/>
            <person name="Oliver K."/>
            <person name="Rajandream M.A."/>
            <person name="Richards C."/>
            <person name="Shore L."/>
            <person name="Walsh S.V."/>
            <person name="Barrell B.G."/>
            <person name="Dietrich F.S."/>
            <person name="Mulligan J.T."/>
            <person name="Allen E."/>
            <person name="Araujo R."/>
            <person name="Aviles E."/>
            <person name="Berno A."/>
            <person name="Carpenter J."/>
            <person name="Chen E."/>
            <person name="Cherry J.M."/>
            <person name="Chung E."/>
            <person name="Duncan M."/>
            <person name="Hunicke-Smith S."/>
            <person name="Hyman R.W."/>
            <person name="Komp C."/>
            <person name="Lashkari D."/>
            <person name="Lew H."/>
            <person name="Lin D."/>
            <person name="Mosedale D."/>
            <person name="Nakahara K."/>
            <person name="Namath A."/>
            <person name="Oefner P."/>
            <person name="Oh C."/>
            <person name="Petel F.X."/>
            <person name="Roberts D."/>
            <person name="Schramm S."/>
            <person name="Schroeder M."/>
            <person name="Shogren T."/>
            <person name="Shroff N."/>
            <person name="Winant A."/>
            <person name="Yelton M.A."/>
            <person name="Botstein D."/>
            <person name="Davis R.W."/>
            <person name="Johnston M."/>
            <person name="Andrews S."/>
            <person name="Brinkman R."/>
            <person name="Cooper J."/>
            <person name="Ding H."/>
            <person name="Du Z."/>
            <person name="Favello A."/>
            <person name="Fulton L."/>
            <person name="Gattung S."/>
            <person name="Greco T."/>
            <person name="Hallsworth K."/>
            <person name="Hawkins J."/>
            <person name="Hillier L.W."/>
            <person name="Jier M."/>
            <person name="Johnson D."/>
            <person name="Johnston L."/>
            <person name="Kirsten J."/>
            <person name="Kucaba T."/>
            <person name="Langston Y."/>
            <person name="Latreille P."/>
            <person name="Le T."/>
            <person name="Mardis E."/>
            <person name="Menezes S."/>
            <person name="Miller N."/>
            <person name="Nhan M."/>
            <person name="Pauley A."/>
            <person name="Peluso D."/>
            <person name="Rifkin L."/>
            <person name="Riles L."/>
            <person name="Taich A."/>
            <person name="Trevaskis E."/>
            <person name="Vignati D."/>
            <person name="Wilcox L."/>
            <person name="Wohldman P."/>
            <person name="Vaudin M."/>
            <person name="Wilson R."/>
            <person name="Waterston R."/>
            <person name="Albermann K."/>
            <person name="Hani J."/>
            <person name="Heumann K."/>
            <person name="Kleine K."/>
            <person name="Mewes H.-W."/>
            <person name="Zollner A."/>
            <person name="Zaccaria P."/>
        </authorList>
    </citation>
    <scope>NUCLEOTIDE SEQUENCE [LARGE SCALE GENOMIC DNA]</scope>
    <source>
        <strain>ATCC 204508 / S288c</strain>
    </source>
</reference>
<reference key="2">
    <citation type="journal article" date="2014" name="G3 (Bethesda)">
        <title>The reference genome sequence of Saccharomyces cerevisiae: Then and now.</title>
        <authorList>
            <person name="Engel S.R."/>
            <person name="Dietrich F.S."/>
            <person name="Fisk D.G."/>
            <person name="Binkley G."/>
            <person name="Balakrishnan R."/>
            <person name="Costanzo M.C."/>
            <person name="Dwight S.S."/>
            <person name="Hitz B.C."/>
            <person name="Karra K."/>
            <person name="Nash R.S."/>
            <person name="Weng S."/>
            <person name="Wong E.D."/>
            <person name="Lloyd P."/>
            <person name="Skrzypek M.S."/>
            <person name="Miyasato S.R."/>
            <person name="Simison M."/>
            <person name="Cherry J.M."/>
        </authorList>
    </citation>
    <scope>GENOME REANNOTATION</scope>
    <source>
        <strain>ATCC 204508 / S288c</strain>
    </source>
</reference>
<organism>
    <name type="scientific">Saccharomyces cerevisiae (strain ATCC 204508 / S288c)</name>
    <name type="common">Baker's yeast</name>
    <dbReference type="NCBI Taxonomy" id="559292"/>
    <lineage>
        <taxon>Eukaryota</taxon>
        <taxon>Fungi</taxon>
        <taxon>Dikarya</taxon>
        <taxon>Ascomycota</taxon>
        <taxon>Saccharomycotina</taxon>
        <taxon>Saccharomycetes</taxon>
        <taxon>Saccharomycetales</taxon>
        <taxon>Saccharomycetaceae</taxon>
        <taxon>Saccharomyces</taxon>
    </lineage>
</organism>
<accession>Q05612</accession>
<accession>A0A1S0T068</accession>
<gene>
    <name type="ordered locus">YDR278C</name>
</gene>
<comment type="subcellular location">
    <subcellularLocation>
        <location evidence="2">Membrane</location>
        <topology evidence="2">Single-pass membrane protein</topology>
    </subcellularLocation>
</comment>
<protein>
    <recommendedName>
        <fullName>Uncharacterized protein YDR278C</fullName>
    </recommendedName>
</protein>
<name>YD278_YEAST</name>
<keyword id="KW-0472">Membrane</keyword>
<keyword id="KW-1185">Reference proteome</keyword>
<keyword id="KW-0812">Transmembrane</keyword>
<keyword id="KW-1133">Transmembrane helix</keyword>